<proteinExistence type="inferred from homology"/>
<organism>
    <name type="scientific">Cerastes vipera</name>
    <name type="common">Sahara sand viper</name>
    <dbReference type="NCBI Taxonomy" id="8698"/>
    <lineage>
        <taxon>Eukaryota</taxon>
        <taxon>Metazoa</taxon>
        <taxon>Chordata</taxon>
        <taxon>Craniata</taxon>
        <taxon>Vertebrata</taxon>
        <taxon>Euteleostomi</taxon>
        <taxon>Lepidosauria</taxon>
        <taxon>Squamata</taxon>
        <taxon>Bifurcata</taxon>
        <taxon>Unidentata</taxon>
        <taxon>Episquamata</taxon>
        <taxon>Toxicofera</taxon>
        <taxon>Serpentes</taxon>
        <taxon>Colubroidea</taxon>
        <taxon>Viperidae</taxon>
        <taxon>Viperinae</taxon>
        <taxon>Cerastes</taxon>
    </lineage>
</organism>
<feature type="chain" id="PRO_5000076853" description="Disintegrin CV">
    <location>
        <begin position="1"/>
        <end position="43"/>
    </location>
</feature>
<feature type="domain" description="Disintegrin">
    <location>
        <begin position="1"/>
        <end position="43"/>
    </location>
</feature>
<feature type="short sequence motif" description="Cell attachment site; atypical (RTS)">
    <location>
        <begin position="21"/>
        <end position="23"/>
    </location>
</feature>
<feature type="disulfide bond" evidence="2">
    <location>
        <begin position="1"/>
        <end position="10"/>
    </location>
</feature>
<feature type="disulfide bond" evidence="2">
    <location>
        <begin position="6"/>
        <end position="29"/>
    </location>
</feature>
<feature type="disulfide bond" evidence="2">
    <location>
        <begin position="7"/>
        <end position="34"/>
    </location>
</feature>
<feature type="disulfide bond" evidence="2">
    <location>
        <begin position="19"/>
        <end position="36"/>
    </location>
</feature>
<protein>
    <recommendedName>
        <fullName>Disintegrin CV</fullName>
    </recommendedName>
    <alternativeName>
        <fullName>Disintegrin CV-short</fullName>
    </alternativeName>
</protein>
<comment type="function">
    <text evidence="1">Specifically interacts with the alpha-1/beta-1 integrin (ITGA1/ITGB1). Exhibits highly inhibitory effects on cell adhesion and cell migration to collagens I and IV. Also shows in vivo anti-angiogenic activity (By similarity).</text>
</comment>
<comment type="subunit">
    <text evidence="1">Monomer.</text>
</comment>
<comment type="subcellular location">
    <subcellularLocation>
        <location evidence="4">Secreted</location>
    </subcellularLocation>
</comment>
<comment type="tissue specificity">
    <text evidence="4">Expressed by the venom gland.</text>
</comment>
<comment type="similarity">
    <text evidence="3">Belongs to the disintegrin family. Short disintegrin subfamily.</text>
</comment>
<evidence type="ECO:0000250" key="1">
    <source>
        <dbReference type="UniProtKB" id="Q3BK14"/>
    </source>
</evidence>
<evidence type="ECO:0000250" key="2">
    <source>
        <dbReference type="UniProtKB" id="Q7ZZM2"/>
    </source>
</evidence>
<evidence type="ECO:0000305" key="3"/>
<evidence type="ECO:0000305" key="4">
    <source>
    </source>
</evidence>
<reference key="1">
    <citation type="journal article" date="2006" name="Biochem. J.">
        <title>Molecular cloning of disintegrins from Cerastes vipera and Macrovipera lebetina transmediterranea venom gland cDNA libraries: insight into the evolution of the snake venom integrin-inhibition system.</title>
        <authorList>
            <person name="Sanz L."/>
            <person name="Bazaa A."/>
            <person name="Marrakchi N."/>
            <person name="Perez A."/>
            <person name="Chenik M."/>
            <person name="Bel Lasfer Z."/>
            <person name="El Ayeb M."/>
            <person name="Calvete J.J."/>
        </authorList>
    </citation>
    <scope>NUCLEOTIDE SEQUENCE [MRNA]</scope>
    <source>
        <tissue>Venom gland</tissue>
    </source>
</reference>
<accession>Q3BK17</accession>
<name>DIS_CERVI</name>
<dbReference type="EMBL" id="AM114012">
    <property type="protein sequence ID" value="CAJ34936.1"/>
    <property type="molecule type" value="mRNA"/>
</dbReference>
<dbReference type="BMRB" id="Q3BK17"/>
<dbReference type="SMR" id="Q3BK17"/>
<dbReference type="GO" id="GO:0005576">
    <property type="term" value="C:extracellular region"/>
    <property type="evidence" value="ECO:0007669"/>
    <property type="project" value="UniProtKB-SubCell"/>
</dbReference>
<dbReference type="GO" id="GO:0090729">
    <property type="term" value="F:toxin activity"/>
    <property type="evidence" value="ECO:0007669"/>
    <property type="project" value="UniProtKB-KW"/>
</dbReference>
<dbReference type="GO" id="GO:0001525">
    <property type="term" value="P:angiogenesis"/>
    <property type="evidence" value="ECO:0007669"/>
    <property type="project" value="UniProtKB-KW"/>
</dbReference>
<dbReference type="GO" id="GO:0030154">
    <property type="term" value="P:cell differentiation"/>
    <property type="evidence" value="ECO:0007669"/>
    <property type="project" value="UniProtKB-KW"/>
</dbReference>
<dbReference type="Gene3D" id="4.10.70.10">
    <property type="entry name" value="Disintegrin domain"/>
    <property type="match status" value="1"/>
</dbReference>
<dbReference type="InterPro" id="IPR001762">
    <property type="entry name" value="Disintegrin_dom"/>
</dbReference>
<dbReference type="InterPro" id="IPR036436">
    <property type="entry name" value="Disintegrin_dom_sf"/>
</dbReference>
<dbReference type="PRINTS" id="PR00289">
    <property type="entry name" value="DISINTEGRIN"/>
</dbReference>
<dbReference type="SUPFAM" id="SSF57552">
    <property type="entry name" value="Blood coagulation inhibitor (disintegrin)"/>
    <property type="match status" value="1"/>
</dbReference>
<keyword id="KW-0037">Angiogenesis</keyword>
<keyword id="KW-1217">Cell adhesion impairing toxin</keyword>
<keyword id="KW-0217">Developmental protein</keyword>
<keyword id="KW-0221">Differentiation</keyword>
<keyword id="KW-1015">Disulfide bond</keyword>
<keyword id="KW-0964">Secreted</keyword>
<keyword id="KW-0800">Toxin</keyword>
<sequence>CTTGPCCRQCKLKPAGTTCWRTSVSSHYCTGRSCECPSYPGNG</sequence>